<proteinExistence type="evidence at transcript level"/>
<comment type="function">
    <text>Paramyosin is a major structural component of many thick filaments isolated from invertebrate muscles.</text>
</comment>
<comment type="subunit">
    <text evidence="1">Homodimer.</text>
</comment>
<comment type="subcellular location">
    <subcellularLocation>
        <location>Cytoplasm</location>
        <location>Myofibril</location>
    </subcellularLocation>
    <text>Thick filaments of the myofibrils.</text>
</comment>
<comment type="similarity">
    <text evidence="3">Belongs to the paramyosin family.</text>
</comment>
<dbReference type="EMBL" id="AF317670">
    <property type="protein sequence ID" value="AAK01181.1"/>
    <property type="molecule type" value="mRNA"/>
</dbReference>
<dbReference type="EMBL" id="AF462195">
    <property type="protein sequence ID" value="AAO15612.1"/>
    <property type="molecule type" value="mRNA"/>
</dbReference>
<dbReference type="SMR" id="Q9BMM8"/>
<dbReference type="VEuPathDB" id="VectorBase:SSCA005798"/>
<dbReference type="OrthoDB" id="2018427at2759"/>
<dbReference type="Proteomes" id="UP000070412">
    <property type="component" value="Unplaced"/>
</dbReference>
<dbReference type="GO" id="GO:0030016">
    <property type="term" value="C:myofibril"/>
    <property type="evidence" value="ECO:0007669"/>
    <property type="project" value="UniProtKB-SubCell"/>
</dbReference>
<dbReference type="GO" id="GO:0016459">
    <property type="term" value="C:myosin complex"/>
    <property type="evidence" value="ECO:0007669"/>
    <property type="project" value="UniProtKB-KW"/>
</dbReference>
<dbReference type="GO" id="GO:0032982">
    <property type="term" value="C:myosin filament"/>
    <property type="evidence" value="ECO:0007669"/>
    <property type="project" value="UniProtKB-KW"/>
</dbReference>
<dbReference type="FunFam" id="1.20.5.340:FF:000035">
    <property type="entry name" value="Paramyosin, long form"/>
    <property type="match status" value="1"/>
</dbReference>
<dbReference type="Gene3D" id="1.20.5.340">
    <property type="match status" value="2"/>
</dbReference>
<dbReference type="Gene3D" id="1.20.5.370">
    <property type="match status" value="2"/>
</dbReference>
<dbReference type="Gene3D" id="1.20.5.1160">
    <property type="entry name" value="Vasodilator-stimulated phosphoprotein"/>
    <property type="match status" value="1"/>
</dbReference>
<dbReference type="InterPro" id="IPR002928">
    <property type="entry name" value="Myosin_tail"/>
</dbReference>
<dbReference type="InterPro" id="IPR014751">
    <property type="entry name" value="XRCC4-like_C"/>
</dbReference>
<dbReference type="PANTHER" id="PTHR46349">
    <property type="entry name" value="CINGULIN-LIKE PROTEIN 1-RELATED"/>
    <property type="match status" value="1"/>
</dbReference>
<dbReference type="PANTHER" id="PTHR46349:SF6">
    <property type="entry name" value="MYOSIN-6-LIKE"/>
    <property type="match status" value="1"/>
</dbReference>
<dbReference type="Pfam" id="PF01576">
    <property type="entry name" value="Myosin_tail_1"/>
    <property type="match status" value="1"/>
</dbReference>
<dbReference type="SUPFAM" id="SSF90257">
    <property type="entry name" value="Myosin rod fragments"/>
    <property type="match status" value="3"/>
</dbReference>
<keyword id="KW-0175">Coiled coil</keyword>
<keyword id="KW-0963">Cytoplasm</keyword>
<keyword id="KW-0505">Motor protein</keyword>
<keyword id="KW-0514">Muscle protein</keyword>
<keyword id="KW-0518">Myosin</keyword>
<keyword id="KW-1185">Reference proteome</keyword>
<keyword id="KW-0787">Thick filament</keyword>
<organism>
    <name type="scientific">Sarcoptes scabiei</name>
    <name type="common">Itch mite</name>
    <name type="synonym">Acarus scabiei</name>
    <dbReference type="NCBI Taxonomy" id="52283"/>
    <lineage>
        <taxon>Eukaryota</taxon>
        <taxon>Metazoa</taxon>
        <taxon>Ecdysozoa</taxon>
        <taxon>Arthropoda</taxon>
        <taxon>Chelicerata</taxon>
        <taxon>Arachnida</taxon>
        <taxon>Acari</taxon>
        <taxon>Acariformes</taxon>
        <taxon>Sarcoptiformes</taxon>
        <taxon>Astigmata</taxon>
        <taxon>Psoroptidia</taxon>
        <taxon>Sarcoptoidea</taxon>
        <taxon>Sarcoptidae</taxon>
        <taxon>Sarcoptinae</taxon>
        <taxon>Sarcoptes</taxon>
    </lineage>
</organism>
<accession>Q9BMM8</accession>
<accession>Q8I9R6</accession>
<protein>
    <recommendedName>
        <fullName>Paramyosin</fullName>
    </recommendedName>
</protein>
<name>MYSP_SARSC</name>
<feature type="chain" id="PRO_0000211255" description="Paramyosin">
    <location>
        <begin position="1"/>
        <end position="876"/>
    </location>
</feature>
<feature type="region of interest" description="Nonhelical region" evidence="2">
    <location>
        <begin position="1"/>
        <end position="28"/>
    </location>
</feature>
<feature type="region of interest" description="Nonhelical region" evidence="2">
    <location>
        <begin position="856"/>
        <end position="876"/>
    </location>
</feature>
<feature type="coiled-coil region" evidence="2">
    <location>
        <begin position="29"/>
        <end position="855"/>
    </location>
</feature>
<feature type="sequence conflict" description="In Ref. 2; AAO15612." evidence="3" ref="2">
    <original>A</original>
    <variation>E</variation>
    <location>
        <position position="339"/>
    </location>
</feature>
<feature type="sequence conflict" description="In Ref. 2; AAO15612." evidence="3" ref="2">
    <original>TR</original>
    <variation>Q</variation>
    <location>
        <begin position="810"/>
        <end position="811"/>
    </location>
</feature>
<evidence type="ECO:0000250" key="1"/>
<evidence type="ECO:0000255" key="2"/>
<evidence type="ECO:0000305" key="3"/>
<sequence>MSARSAKFMYRSGNAGASGDLSVEYGTDLGALTRLEDKIRLLSDDLESEREMRQRIEREKAELQIQVMSLSERLEEAEGSSESVVEMNKKRDSELAKLRKLLEDVHLESEETAHHLRQKHQAAIQEMQDQLDQVQKAKNKSDKEKQKFQAEVFELLAQLETANKEKLTAMKTVEKLEYTVHELNIKIEEINRTVIELTSQKTRLSQENTELIKEVHEHKMQLDNANHLKQQLAQQLEDTKHRLEEEERKRASLENHAHTLEVELESLKVQLDEESEARLELERQLTKANGDAASWKSKYEAELQAHADEVEELRRKMAQKISEYEEQLEALLNKCSSLAKQKSRLQSEVEVLIMDLEKATTHAQQLEKRVAQLEKLNLDLKNKLEEVTMLMEQAQKEARAKAAELQKLQHEYEKLRDQRDALARENKKLTDDLAECKSQLNDAHRRIHEQEIEIKRLENEREELSAAYKEAETLRKQEEAKNQRLTAELAQVRHDYEKRLAQKEEEIEALRKQYQIEIEQLNMRLAEAEAKLKTEIARLKKKYQAQITELELSLDAANKANIDLQKTIKKQALQITELQAHYDEVHRQLQQAVDQLGVTQRRCQALQAELEEQRIALEQANRAKRQAEQLHEEAVARVNELTTINVNLASAKSKLESEFAALQNDYDEVHKELRISDERVQKLTIELKSTKDLLVEEQERLVKMETVKKSLEQEVRTLHVRIEEVEANALAGGKRVIAKLESRIRDVEIEVEEERRRHAETEKMLRKKDHRLKELLVQNEEDHKQIQLLQEMVDKMNEKVKVYKRQMQETREGMSQQNLTRVRRFQRELEAAEDRADQAESNLSFIRAKHRSWVTTSQVPGGTRQVFVTQEEQSNY</sequence>
<reference key="1">
    <citation type="journal article" date="2001" name="Parasitology">
        <title>Paramyosin from the parasitic mite Sarcoptes scabiei: cDNA cloning and heterologous expression.</title>
        <authorList>
            <person name="Mattsson J.G."/>
            <person name="Ljunggren E.L."/>
            <person name="Bergstrom K."/>
        </authorList>
    </citation>
    <scope>NUCLEOTIDE SEQUENCE [MRNA]</scope>
</reference>
<reference key="2">
    <citation type="submission" date="2001-12" db="EMBL/GenBank/DDBJ databases">
        <title>Generation and characterization of cDNA clones from Sarcoptes scabiei type hominis for an expressed sequence tag library; identification of homologs of house dust mite allergens.</title>
        <authorList>
            <person name="Fischer K."/>
            <person name="Holt D.C."/>
            <person name="Harumal P."/>
            <person name="Currie B.J."/>
            <person name="Walton S.F."/>
            <person name="Kemp D.J."/>
        </authorList>
    </citation>
    <scope>NUCLEOTIDE SEQUENCE [MRNA] OF 238-876</scope>
</reference>